<reference key="1">
    <citation type="journal article" date="2008" name="PLoS ONE">
        <title>Comparative analysis of Acinetobacters: three genomes for three lifestyles.</title>
        <authorList>
            <person name="Vallenet D."/>
            <person name="Nordmann P."/>
            <person name="Barbe V."/>
            <person name="Poirel L."/>
            <person name="Mangenot S."/>
            <person name="Bataille E."/>
            <person name="Dossat C."/>
            <person name="Gas S."/>
            <person name="Kreimeyer A."/>
            <person name="Lenoble P."/>
            <person name="Oztas S."/>
            <person name="Poulain J."/>
            <person name="Segurens B."/>
            <person name="Robert C."/>
            <person name="Abergel C."/>
            <person name="Claverie J.-M."/>
            <person name="Raoult D."/>
            <person name="Medigue C."/>
            <person name="Weissenbach J."/>
            <person name="Cruveiller S."/>
        </authorList>
    </citation>
    <scope>NUCLEOTIDE SEQUENCE [LARGE SCALE GENOMIC DNA]</scope>
    <source>
        <strain>AYE</strain>
    </source>
</reference>
<gene>
    <name evidence="1" type="primary">atpC</name>
    <name type="ordered locus">ABAYE3715</name>
</gene>
<accession>B0VBP2</accession>
<sequence length="139" mass="14539">MATMQCDVVSVKESIYSGAVTMLIAKGAGGELGILPGHAPLVTLLQPGPIRVLLENGTEEIVYVSGGVLEVQPHVVTVLADTAIRADNLDEAAILEARKNAEQLLANQKSDLDSAAALAALAETAAQLETIRKIKNRAQ</sequence>
<comment type="function">
    <text evidence="1">Produces ATP from ADP in the presence of a proton gradient across the membrane.</text>
</comment>
<comment type="subunit">
    <text evidence="1">F-type ATPases have 2 components, CF(1) - the catalytic core - and CF(0) - the membrane proton channel. CF(1) has five subunits: alpha(3), beta(3), gamma(1), delta(1), epsilon(1). CF(0) has three main subunits: a, b and c.</text>
</comment>
<comment type="subcellular location">
    <subcellularLocation>
        <location evidence="1">Cell inner membrane</location>
        <topology evidence="1">Peripheral membrane protein</topology>
    </subcellularLocation>
</comment>
<comment type="similarity">
    <text evidence="1">Belongs to the ATPase epsilon chain family.</text>
</comment>
<evidence type="ECO:0000255" key="1">
    <source>
        <dbReference type="HAMAP-Rule" id="MF_00530"/>
    </source>
</evidence>
<dbReference type="EMBL" id="CU459141">
    <property type="protein sequence ID" value="CAM88479.1"/>
    <property type="molecule type" value="Genomic_DNA"/>
</dbReference>
<dbReference type="RefSeq" id="WP_000224542.1">
    <property type="nucleotide sequence ID" value="NZ_JBDGFB010000006.1"/>
</dbReference>
<dbReference type="SMR" id="B0VBP2"/>
<dbReference type="EnsemblBacteria" id="CAM88479">
    <property type="protein sequence ID" value="CAM88479"/>
    <property type="gene ID" value="ABAYE3715"/>
</dbReference>
<dbReference type="KEGG" id="aby:ABAYE3715"/>
<dbReference type="HOGENOM" id="CLU_084338_2_0_6"/>
<dbReference type="GO" id="GO:0005886">
    <property type="term" value="C:plasma membrane"/>
    <property type="evidence" value="ECO:0007669"/>
    <property type="project" value="UniProtKB-SubCell"/>
</dbReference>
<dbReference type="GO" id="GO:0045259">
    <property type="term" value="C:proton-transporting ATP synthase complex"/>
    <property type="evidence" value="ECO:0007669"/>
    <property type="project" value="UniProtKB-KW"/>
</dbReference>
<dbReference type="GO" id="GO:0005524">
    <property type="term" value="F:ATP binding"/>
    <property type="evidence" value="ECO:0007669"/>
    <property type="project" value="UniProtKB-UniRule"/>
</dbReference>
<dbReference type="GO" id="GO:0046933">
    <property type="term" value="F:proton-transporting ATP synthase activity, rotational mechanism"/>
    <property type="evidence" value="ECO:0007669"/>
    <property type="project" value="UniProtKB-UniRule"/>
</dbReference>
<dbReference type="CDD" id="cd12152">
    <property type="entry name" value="F1-ATPase_delta"/>
    <property type="match status" value="1"/>
</dbReference>
<dbReference type="FunFam" id="2.60.15.10:FF:000001">
    <property type="entry name" value="ATP synthase epsilon chain"/>
    <property type="match status" value="1"/>
</dbReference>
<dbReference type="Gene3D" id="1.20.5.440">
    <property type="entry name" value="ATP synthase delta/epsilon subunit, C-terminal domain"/>
    <property type="match status" value="1"/>
</dbReference>
<dbReference type="Gene3D" id="2.60.15.10">
    <property type="entry name" value="F0F1 ATP synthase delta/epsilon subunit, N-terminal"/>
    <property type="match status" value="1"/>
</dbReference>
<dbReference type="HAMAP" id="MF_00530">
    <property type="entry name" value="ATP_synth_epsil_bac"/>
    <property type="match status" value="1"/>
</dbReference>
<dbReference type="InterPro" id="IPR036794">
    <property type="entry name" value="ATP_F1_dsu/esu_C_sf"/>
</dbReference>
<dbReference type="InterPro" id="IPR001469">
    <property type="entry name" value="ATP_synth_F1_dsu/esu"/>
</dbReference>
<dbReference type="InterPro" id="IPR020546">
    <property type="entry name" value="ATP_synth_F1_dsu/esu_N"/>
</dbReference>
<dbReference type="InterPro" id="IPR036771">
    <property type="entry name" value="ATPsynth_dsu/esu_N"/>
</dbReference>
<dbReference type="NCBIfam" id="TIGR01216">
    <property type="entry name" value="ATP_synt_epsi"/>
    <property type="match status" value="1"/>
</dbReference>
<dbReference type="NCBIfam" id="NF001847">
    <property type="entry name" value="PRK00571.1-4"/>
    <property type="match status" value="1"/>
</dbReference>
<dbReference type="PANTHER" id="PTHR13822">
    <property type="entry name" value="ATP SYNTHASE DELTA/EPSILON CHAIN"/>
    <property type="match status" value="1"/>
</dbReference>
<dbReference type="PANTHER" id="PTHR13822:SF10">
    <property type="entry name" value="ATP SYNTHASE EPSILON CHAIN, CHLOROPLASTIC"/>
    <property type="match status" value="1"/>
</dbReference>
<dbReference type="Pfam" id="PF02823">
    <property type="entry name" value="ATP-synt_DE_N"/>
    <property type="match status" value="1"/>
</dbReference>
<dbReference type="SUPFAM" id="SSF46604">
    <property type="entry name" value="Epsilon subunit of F1F0-ATP synthase C-terminal domain"/>
    <property type="match status" value="1"/>
</dbReference>
<dbReference type="SUPFAM" id="SSF51344">
    <property type="entry name" value="Epsilon subunit of F1F0-ATP synthase N-terminal domain"/>
    <property type="match status" value="1"/>
</dbReference>
<proteinExistence type="inferred from homology"/>
<name>ATPE_ACIBY</name>
<keyword id="KW-0066">ATP synthesis</keyword>
<keyword id="KW-0997">Cell inner membrane</keyword>
<keyword id="KW-1003">Cell membrane</keyword>
<keyword id="KW-0139">CF(1)</keyword>
<keyword id="KW-0375">Hydrogen ion transport</keyword>
<keyword id="KW-0406">Ion transport</keyword>
<keyword id="KW-0472">Membrane</keyword>
<keyword id="KW-0813">Transport</keyword>
<protein>
    <recommendedName>
        <fullName evidence="1">ATP synthase epsilon chain</fullName>
    </recommendedName>
    <alternativeName>
        <fullName evidence="1">ATP synthase F1 sector epsilon subunit</fullName>
    </alternativeName>
    <alternativeName>
        <fullName evidence="1">F-ATPase epsilon subunit</fullName>
    </alternativeName>
</protein>
<organism>
    <name type="scientific">Acinetobacter baumannii (strain AYE)</name>
    <dbReference type="NCBI Taxonomy" id="509173"/>
    <lineage>
        <taxon>Bacteria</taxon>
        <taxon>Pseudomonadati</taxon>
        <taxon>Pseudomonadota</taxon>
        <taxon>Gammaproteobacteria</taxon>
        <taxon>Moraxellales</taxon>
        <taxon>Moraxellaceae</taxon>
        <taxon>Acinetobacter</taxon>
        <taxon>Acinetobacter calcoaceticus/baumannii complex</taxon>
    </lineage>
</organism>
<feature type="chain" id="PRO_1000127818" description="ATP synthase epsilon chain">
    <location>
        <begin position="1"/>
        <end position="139"/>
    </location>
</feature>